<feature type="chain" id="PRO_1000019886" description="Probable cytosol aminopeptidase">
    <location>
        <begin position="1"/>
        <end position="504"/>
    </location>
</feature>
<feature type="active site" evidence="1">
    <location>
        <position position="288"/>
    </location>
</feature>
<feature type="active site" evidence="1">
    <location>
        <position position="362"/>
    </location>
</feature>
<feature type="binding site" evidence="1">
    <location>
        <position position="276"/>
    </location>
    <ligand>
        <name>Mn(2+)</name>
        <dbReference type="ChEBI" id="CHEBI:29035"/>
        <label>2</label>
    </ligand>
</feature>
<feature type="binding site" evidence="1">
    <location>
        <position position="281"/>
    </location>
    <ligand>
        <name>Mn(2+)</name>
        <dbReference type="ChEBI" id="CHEBI:29035"/>
        <label>1</label>
    </ligand>
</feature>
<feature type="binding site" evidence="1">
    <location>
        <position position="281"/>
    </location>
    <ligand>
        <name>Mn(2+)</name>
        <dbReference type="ChEBI" id="CHEBI:29035"/>
        <label>2</label>
    </ligand>
</feature>
<feature type="binding site" evidence="1">
    <location>
        <position position="299"/>
    </location>
    <ligand>
        <name>Mn(2+)</name>
        <dbReference type="ChEBI" id="CHEBI:29035"/>
        <label>2</label>
    </ligand>
</feature>
<feature type="binding site" evidence="1">
    <location>
        <position position="358"/>
    </location>
    <ligand>
        <name>Mn(2+)</name>
        <dbReference type="ChEBI" id="CHEBI:29035"/>
        <label>1</label>
    </ligand>
</feature>
<feature type="binding site" evidence="1">
    <location>
        <position position="360"/>
    </location>
    <ligand>
        <name>Mn(2+)</name>
        <dbReference type="ChEBI" id="CHEBI:29035"/>
        <label>1</label>
    </ligand>
</feature>
<feature type="binding site" evidence="1">
    <location>
        <position position="360"/>
    </location>
    <ligand>
        <name>Mn(2+)</name>
        <dbReference type="ChEBI" id="CHEBI:29035"/>
        <label>2</label>
    </ligand>
</feature>
<organism>
    <name type="scientific">Bordetella avium (strain 197N)</name>
    <dbReference type="NCBI Taxonomy" id="360910"/>
    <lineage>
        <taxon>Bacteria</taxon>
        <taxon>Pseudomonadati</taxon>
        <taxon>Pseudomonadota</taxon>
        <taxon>Betaproteobacteria</taxon>
        <taxon>Burkholderiales</taxon>
        <taxon>Alcaligenaceae</taxon>
        <taxon>Bordetella</taxon>
    </lineage>
</organism>
<name>AMPA_BORA1</name>
<accession>Q2KWX0</accession>
<keyword id="KW-0031">Aminopeptidase</keyword>
<keyword id="KW-0963">Cytoplasm</keyword>
<keyword id="KW-0378">Hydrolase</keyword>
<keyword id="KW-0464">Manganese</keyword>
<keyword id="KW-0479">Metal-binding</keyword>
<keyword id="KW-0645">Protease</keyword>
<keyword id="KW-1185">Reference proteome</keyword>
<reference key="1">
    <citation type="journal article" date="2006" name="J. Bacteriol.">
        <title>Comparison of the genome sequence of the poultry pathogen Bordetella avium with those of B. bronchiseptica, B. pertussis, and B. parapertussis reveals extensive diversity in surface structures associated with host interaction.</title>
        <authorList>
            <person name="Sebaihia M."/>
            <person name="Preston A."/>
            <person name="Maskell D.J."/>
            <person name="Kuzmiak H."/>
            <person name="Connell T.D."/>
            <person name="King N.D."/>
            <person name="Orndorff P.E."/>
            <person name="Miyamoto D.M."/>
            <person name="Thomson N.R."/>
            <person name="Harris D."/>
            <person name="Goble A."/>
            <person name="Lord A."/>
            <person name="Murphy L."/>
            <person name="Quail M.A."/>
            <person name="Rutter S."/>
            <person name="Squares R."/>
            <person name="Squares S."/>
            <person name="Woodward J."/>
            <person name="Parkhill J."/>
            <person name="Temple L.M."/>
        </authorList>
    </citation>
    <scope>NUCLEOTIDE SEQUENCE [LARGE SCALE GENOMIC DNA]</scope>
    <source>
        <strain>197N</strain>
    </source>
</reference>
<dbReference type="EC" id="3.4.11.1" evidence="1"/>
<dbReference type="EC" id="3.4.11.10" evidence="1"/>
<dbReference type="EMBL" id="AM167904">
    <property type="protein sequence ID" value="CAJ48746.1"/>
    <property type="molecule type" value="Genomic_DNA"/>
</dbReference>
<dbReference type="RefSeq" id="WP_012416820.1">
    <property type="nucleotide sequence ID" value="NC_010645.1"/>
</dbReference>
<dbReference type="SMR" id="Q2KWX0"/>
<dbReference type="STRING" id="360910.BAV1137"/>
<dbReference type="KEGG" id="bav:BAV1137"/>
<dbReference type="eggNOG" id="COG0260">
    <property type="taxonomic scope" value="Bacteria"/>
</dbReference>
<dbReference type="HOGENOM" id="CLU_013734_0_1_4"/>
<dbReference type="OrthoDB" id="9809354at2"/>
<dbReference type="Proteomes" id="UP000001977">
    <property type="component" value="Chromosome"/>
</dbReference>
<dbReference type="GO" id="GO:0005737">
    <property type="term" value="C:cytoplasm"/>
    <property type="evidence" value="ECO:0007669"/>
    <property type="project" value="UniProtKB-SubCell"/>
</dbReference>
<dbReference type="GO" id="GO:0030145">
    <property type="term" value="F:manganese ion binding"/>
    <property type="evidence" value="ECO:0007669"/>
    <property type="project" value="UniProtKB-UniRule"/>
</dbReference>
<dbReference type="GO" id="GO:0070006">
    <property type="term" value="F:metalloaminopeptidase activity"/>
    <property type="evidence" value="ECO:0007669"/>
    <property type="project" value="InterPro"/>
</dbReference>
<dbReference type="GO" id="GO:0006508">
    <property type="term" value="P:proteolysis"/>
    <property type="evidence" value="ECO:0007669"/>
    <property type="project" value="UniProtKB-KW"/>
</dbReference>
<dbReference type="CDD" id="cd00433">
    <property type="entry name" value="Peptidase_M17"/>
    <property type="match status" value="1"/>
</dbReference>
<dbReference type="FunFam" id="3.40.630.10:FF:000004">
    <property type="entry name" value="Probable cytosol aminopeptidase"/>
    <property type="match status" value="1"/>
</dbReference>
<dbReference type="Gene3D" id="3.40.220.10">
    <property type="entry name" value="Leucine Aminopeptidase, subunit E, domain 1"/>
    <property type="match status" value="1"/>
</dbReference>
<dbReference type="Gene3D" id="3.40.630.10">
    <property type="entry name" value="Zn peptidases"/>
    <property type="match status" value="1"/>
</dbReference>
<dbReference type="HAMAP" id="MF_00181">
    <property type="entry name" value="Cytosol_peptidase_M17"/>
    <property type="match status" value="1"/>
</dbReference>
<dbReference type="InterPro" id="IPR011356">
    <property type="entry name" value="Leucine_aapep/pepB"/>
</dbReference>
<dbReference type="InterPro" id="IPR043472">
    <property type="entry name" value="Macro_dom-like"/>
</dbReference>
<dbReference type="InterPro" id="IPR000819">
    <property type="entry name" value="Peptidase_M17_C"/>
</dbReference>
<dbReference type="InterPro" id="IPR023042">
    <property type="entry name" value="Peptidase_M17_leu_NH2_pept"/>
</dbReference>
<dbReference type="InterPro" id="IPR008283">
    <property type="entry name" value="Peptidase_M17_N"/>
</dbReference>
<dbReference type="NCBIfam" id="NF002074">
    <property type="entry name" value="PRK00913.1-4"/>
    <property type="match status" value="1"/>
</dbReference>
<dbReference type="PANTHER" id="PTHR11963:SF23">
    <property type="entry name" value="CYTOSOL AMINOPEPTIDASE"/>
    <property type="match status" value="1"/>
</dbReference>
<dbReference type="PANTHER" id="PTHR11963">
    <property type="entry name" value="LEUCINE AMINOPEPTIDASE-RELATED"/>
    <property type="match status" value="1"/>
</dbReference>
<dbReference type="Pfam" id="PF00883">
    <property type="entry name" value="Peptidase_M17"/>
    <property type="match status" value="1"/>
</dbReference>
<dbReference type="Pfam" id="PF02789">
    <property type="entry name" value="Peptidase_M17_N"/>
    <property type="match status" value="1"/>
</dbReference>
<dbReference type="PRINTS" id="PR00481">
    <property type="entry name" value="LAMNOPPTDASE"/>
</dbReference>
<dbReference type="SUPFAM" id="SSF52949">
    <property type="entry name" value="Macro domain-like"/>
    <property type="match status" value="1"/>
</dbReference>
<dbReference type="SUPFAM" id="SSF53187">
    <property type="entry name" value="Zn-dependent exopeptidases"/>
    <property type="match status" value="1"/>
</dbReference>
<dbReference type="PROSITE" id="PS00631">
    <property type="entry name" value="CYTOSOL_AP"/>
    <property type="match status" value="1"/>
</dbReference>
<evidence type="ECO:0000255" key="1">
    <source>
        <dbReference type="HAMAP-Rule" id="MF_00181"/>
    </source>
</evidence>
<gene>
    <name evidence="1" type="primary">pepA</name>
    <name type="ordered locus">BAV1137</name>
</gene>
<proteinExistence type="inferred from homology"/>
<sequence>MEFSTQTTASLHLIKTSALAVGVYADGVLSPAAEQIDHASNGAIRAVTKTEFRGRAGATLVLRNLAGISAQRVVLVGLGKQEEYSVRAHSGAEQAFAAYLVAAQLTEGVSTLAALPIENSTMRDRARAAAIAAGQATYHYDATFGKPDREALPKLKKITQIIERAEAAQTQQGLREGAAIANGMALTRTLGNLPGNICTPTYLGETARKLAREFKTLIKVEVLDRKQVEALGMGSFVSVARGSAEPLRFVVLRYNGKPATARRTRGAAGPVVLVGKGITFDAGGISIKPAATMDEMKYDMCGAASVLGTFRALAELAPALEVVGLIAACENLPSGTANKPGDVVTSMSGQTIEILNTDAEGRLVLCDALTYAERFKPSAVIDIATLTGACVVALGGVNTGLFSKDDALASALLEAGRQTQDPAWRMPLDDAYQEQLRSNFADIANIGGPQAGAVTAACFLSRFTQAYPWAHLDIAGTAWRGGKDKGATGRPVPLLMQYLLNQAA</sequence>
<protein>
    <recommendedName>
        <fullName evidence="1">Probable cytosol aminopeptidase</fullName>
        <ecNumber evidence="1">3.4.11.1</ecNumber>
    </recommendedName>
    <alternativeName>
        <fullName evidence="1">Leucine aminopeptidase</fullName>
        <shortName evidence="1">LAP</shortName>
        <ecNumber evidence="1">3.4.11.10</ecNumber>
    </alternativeName>
    <alternativeName>
        <fullName evidence="1">Leucyl aminopeptidase</fullName>
    </alternativeName>
</protein>
<comment type="function">
    <text evidence="1">Presumably involved in the processing and regular turnover of intracellular proteins. Catalyzes the removal of unsubstituted N-terminal amino acids from various peptides.</text>
</comment>
<comment type="catalytic activity">
    <reaction evidence="1">
        <text>Release of an N-terminal amino acid, Xaa-|-Yaa-, in which Xaa is preferably Leu, but may be other amino acids including Pro although not Arg or Lys, and Yaa may be Pro. Amino acid amides and methyl esters are also readily hydrolyzed, but rates on arylamides are exceedingly low.</text>
        <dbReference type="EC" id="3.4.11.1"/>
    </reaction>
</comment>
<comment type="catalytic activity">
    <reaction evidence="1">
        <text>Release of an N-terminal amino acid, preferentially leucine, but not glutamic or aspartic acids.</text>
        <dbReference type="EC" id="3.4.11.10"/>
    </reaction>
</comment>
<comment type="cofactor">
    <cofactor evidence="1">
        <name>Mn(2+)</name>
        <dbReference type="ChEBI" id="CHEBI:29035"/>
    </cofactor>
    <text evidence="1">Binds 2 manganese ions per subunit.</text>
</comment>
<comment type="subcellular location">
    <subcellularLocation>
        <location evidence="1">Cytoplasm</location>
    </subcellularLocation>
</comment>
<comment type="similarity">
    <text evidence="1">Belongs to the peptidase M17 family.</text>
</comment>